<protein>
    <recommendedName>
        <fullName evidence="1">Bis(5'-nucleosyl)-tetraphosphatase, symmetrical</fullName>
        <ecNumber evidence="1">3.6.1.41</ecNumber>
    </recommendedName>
    <alternativeName>
        <fullName evidence="1">Ap4A hydrolase</fullName>
    </alternativeName>
    <alternativeName>
        <fullName evidence="1">Diadenosine 5',5'''-P1,P4-tetraphosphate pyrophosphohydrolase</fullName>
    </alternativeName>
    <alternativeName>
        <fullName evidence="1">Diadenosine tetraphosphatase</fullName>
    </alternativeName>
</protein>
<name>APAH_BURP0</name>
<reference key="1">
    <citation type="journal article" date="2010" name="Genome Biol. Evol.">
        <title>Continuing evolution of Burkholderia mallei through genome reduction and large-scale rearrangements.</title>
        <authorList>
            <person name="Losada L."/>
            <person name="Ronning C.M."/>
            <person name="DeShazer D."/>
            <person name="Woods D."/>
            <person name="Fedorova N."/>
            <person name="Kim H.S."/>
            <person name="Shabalina S.A."/>
            <person name="Pearson T.R."/>
            <person name="Brinkac L."/>
            <person name="Tan P."/>
            <person name="Nandi T."/>
            <person name="Crabtree J."/>
            <person name="Badger J."/>
            <person name="Beckstrom-Sternberg S."/>
            <person name="Saqib M."/>
            <person name="Schutzer S.E."/>
            <person name="Keim P."/>
            <person name="Nierman W.C."/>
        </authorList>
    </citation>
    <scope>NUCLEOTIDE SEQUENCE [LARGE SCALE GENOMIC DNA]</scope>
    <source>
        <strain>1106a</strain>
    </source>
</reference>
<sequence>MTNFSSSPPIAFGDLQGCHAAYRQLFDTLAPAADTPLWFAGDLVNRGPASLATLREIVALGERAIAVLGNHDLHLLAVAAGIRTLKPGDTIGEILDAPDADDLIEWVRHRPFAHFERGMLMVHAGLLPQWDAALALELADELQRALRAPNWRDTLRSLYGNDPNCWSPDLKHADRLRVAFNAFTRIRFCTPEGAMEFRANGGPAAAPAGYLPWFDAPGRKTADVTVVFGHWAALGLMLRENLVALDSGCVWGNRLSAVRLADDPAARVVTQVACERCGAADE</sequence>
<keyword id="KW-0378">Hydrolase</keyword>
<organism>
    <name type="scientific">Burkholderia pseudomallei (strain 1106a)</name>
    <dbReference type="NCBI Taxonomy" id="357348"/>
    <lineage>
        <taxon>Bacteria</taxon>
        <taxon>Pseudomonadati</taxon>
        <taxon>Pseudomonadota</taxon>
        <taxon>Betaproteobacteria</taxon>
        <taxon>Burkholderiales</taxon>
        <taxon>Burkholderiaceae</taxon>
        <taxon>Burkholderia</taxon>
        <taxon>pseudomallei group</taxon>
    </lineage>
</organism>
<comment type="function">
    <text evidence="1">Hydrolyzes diadenosine 5',5'''-P1,P4-tetraphosphate to yield ADP.</text>
</comment>
<comment type="catalytic activity">
    <reaction evidence="1">
        <text>P(1),P(4)-bis(5'-adenosyl) tetraphosphate + H2O = 2 ADP + 2 H(+)</text>
        <dbReference type="Rhea" id="RHEA:24252"/>
        <dbReference type="ChEBI" id="CHEBI:15377"/>
        <dbReference type="ChEBI" id="CHEBI:15378"/>
        <dbReference type="ChEBI" id="CHEBI:58141"/>
        <dbReference type="ChEBI" id="CHEBI:456216"/>
        <dbReference type="EC" id="3.6.1.41"/>
    </reaction>
</comment>
<comment type="similarity">
    <text evidence="1">Belongs to the Ap4A hydrolase family.</text>
</comment>
<proteinExistence type="inferred from homology"/>
<accession>A3NYF9</accession>
<feature type="chain" id="PRO_1000012049" description="Bis(5'-nucleosyl)-tetraphosphatase, symmetrical">
    <location>
        <begin position="1"/>
        <end position="282"/>
    </location>
</feature>
<evidence type="ECO:0000255" key="1">
    <source>
        <dbReference type="HAMAP-Rule" id="MF_00199"/>
    </source>
</evidence>
<dbReference type="EC" id="3.6.1.41" evidence="1"/>
<dbReference type="EMBL" id="CP000572">
    <property type="protein sequence ID" value="ABN91337.1"/>
    <property type="molecule type" value="Genomic_DNA"/>
</dbReference>
<dbReference type="RefSeq" id="WP_004522249.1">
    <property type="nucleotide sequence ID" value="NC_009076.1"/>
</dbReference>
<dbReference type="SMR" id="A3NYF9"/>
<dbReference type="KEGG" id="bpl:BURPS1106A_3142"/>
<dbReference type="HOGENOM" id="CLU_056184_1_0_4"/>
<dbReference type="Proteomes" id="UP000006738">
    <property type="component" value="Chromosome I"/>
</dbReference>
<dbReference type="GO" id="GO:0008803">
    <property type="term" value="F:bis(5'-nucleosyl)-tetraphosphatase (symmetrical) activity"/>
    <property type="evidence" value="ECO:0007669"/>
    <property type="project" value="UniProtKB-UniRule"/>
</dbReference>
<dbReference type="CDD" id="cd07422">
    <property type="entry name" value="MPP_ApaH"/>
    <property type="match status" value="1"/>
</dbReference>
<dbReference type="Gene3D" id="3.60.21.10">
    <property type="match status" value="1"/>
</dbReference>
<dbReference type="HAMAP" id="MF_00199">
    <property type="entry name" value="ApaH"/>
    <property type="match status" value="1"/>
</dbReference>
<dbReference type="InterPro" id="IPR004617">
    <property type="entry name" value="ApaH"/>
</dbReference>
<dbReference type="InterPro" id="IPR004843">
    <property type="entry name" value="Calcineurin-like_PHP_ApaH"/>
</dbReference>
<dbReference type="InterPro" id="IPR029052">
    <property type="entry name" value="Metallo-depent_PP-like"/>
</dbReference>
<dbReference type="NCBIfam" id="TIGR00668">
    <property type="entry name" value="apaH"/>
    <property type="match status" value="1"/>
</dbReference>
<dbReference type="NCBIfam" id="NF001204">
    <property type="entry name" value="PRK00166.1"/>
    <property type="match status" value="1"/>
</dbReference>
<dbReference type="PANTHER" id="PTHR40942">
    <property type="match status" value="1"/>
</dbReference>
<dbReference type="PANTHER" id="PTHR40942:SF4">
    <property type="entry name" value="CYTOCHROME C5"/>
    <property type="match status" value="1"/>
</dbReference>
<dbReference type="Pfam" id="PF00149">
    <property type="entry name" value="Metallophos"/>
    <property type="match status" value="1"/>
</dbReference>
<dbReference type="PIRSF" id="PIRSF000903">
    <property type="entry name" value="B5n-ttraPtase_sm"/>
    <property type="match status" value="1"/>
</dbReference>
<dbReference type="SUPFAM" id="SSF56300">
    <property type="entry name" value="Metallo-dependent phosphatases"/>
    <property type="match status" value="1"/>
</dbReference>
<gene>
    <name evidence="1" type="primary">apaH</name>
    <name type="ordered locus">BURPS1106A_3142</name>
</gene>